<name>RS16_SYNRU</name>
<protein>
    <recommendedName>
        <fullName evidence="1">Small ribosomal subunit protein uS9</fullName>
    </recommendedName>
    <alternativeName>
        <fullName>40S ribosomal protein S16</fullName>
    </alternativeName>
</protein>
<gene>
    <name type="primary">RPS16</name>
</gene>
<dbReference type="EMBL" id="AF108725">
    <property type="protein sequence ID" value="AAD23965.1"/>
    <property type="molecule type" value="mRNA"/>
</dbReference>
<dbReference type="SMR" id="Q9XEK7"/>
<dbReference type="GO" id="GO:0022627">
    <property type="term" value="C:cytosolic small ribosomal subunit"/>
    <property type="evidence" value="ECO:0007669"/>
    <property type="project" value="TreeGrafter"/>
</dbReference>
<dbReference type="GO" id="GO:0003723">
    <property type="term" value="F:RNA binding"/>
    <property type="evidence" value="ECO:0007669"/>
    <property type="project" value="TreeGrafter"/>
</dbReference>
<dbReference type="GO" id="GO:0003735">
    <property type="term" value="F:structural constituent of ribosome"/>
    <property type="evidence" value="ECO:0007669"/>
    <property type="project" value="InterPro"/>
</dbReference>
<dbReference type="GO" id="GO:0000462">
    <property type="term" value="P:maturation of SSU-rRNA from tricistronic rRNA transcript (SSU-rRNA, 5.8S rRNA, LSU-rRNA)"/>
    <property type="evidence" value="ECO:0007669"/>
    <property type="project" value="TreeGrafter"/>
</dbReference>
<dbReference type="GO" id="GO:0006412">
    <property type="term" value="P:translation"/>
    <property type="evidence" value="ECO:0007669"/>
    <property type="project" value="InterPro"/>
</dbReference>
<dbReference type="FunFam" id="3.30.230.10:FF:000007">
    <property type="entry name" value="40S ribosomal protein S16"/>
    <property type="match status" value="1"/>
</dbReference>
<dbReference type="Gene3D" id="3.30.230.10">
    <property type="match status" value="1"/>
</dbReference>
<dbReference type="InterPro" id="IPR020568">
    <property type="entry name" value="Ribosomal_Su5_D2-typ_SF"/>
</dbReference>
<dbReference type="InterPro" id="IPR000754">
    <property type="entry name" value="Ribosomal_uS9"/>
</dbReference>
<dbReference type="InterPro" id="IPR020574">
    <property type="entry name" value="Ribosomal_uS9_CS"/>
</dbReference>
<dbReference type="InterPro" id="IPR014721">
    <property type="entry name" value="Ribsml_uS5_D2-typ_fold_subgr"/>
</dbReference>
<dbReference type="PANTHER" id="PTHR21569:SF16">
    <property type="entry name" value="RIBOSOMAL PROTEIN S16"/>
    <property type="match status" value="1"/>
</dbReference>
<dbReference type="PANTHER" id="PTHR21569">
    <property type="entry name" value="RIBOSOMAL PROTEIN S9"/>
    <property type="match status" value="1"/>
</dbReference>
<dbReference type="Pfam" id="PF00380">
    <property type="entry name" value="Ribosomal_S9"/>
    <property type="match status" value="1"/>
</dbReference>
<dbReference type="SUPFAM" id="SSF54211">
    <property type="entry name" value="Ribosomal protein S5 domain 2-like"/>
    <property type="match status" value="1"/>
</dbReference>
<dbReference type="PROSITE" id="PS00360">
    <property type="entry name" value="RIBOSOMAL_S9"/>
    <property type="match status" value="1"/>
</dbReference>
<keyword id="KW-0963">Cytoplasm</keyword>
<keyword id="KW-0687">Ribonucleoprotein</keyword>
<keyword id="KW-0689">Ribosomal protein</keyword>
<comment type="subcellular location">
    <subcellularLocation>
        <location>Cytoplasm</location>
    </subcellularLocation>
</comment>
<comment type="similarity">
    <text evidence="1">Belongs to the universal ribosomal protein uS9 family.</text>
</comment>
<reference key="1">
    <citation type="submission" date="1998-11" db="EMBL/GenBank/DDBJ databases">
        <title>Environmental regulation of three ribosomal proteins in the desiccation-tolerant Bryophyte, Tortula ruralis.</title>
        <authorList>
            <person name="Wood A.J."/>
            <person name="Duff R.J."/>
            <person name="Oliver M.J."/>
        </authorList>
    </citation>
    <scope>NUCLEOTIDE SEQUENCE [MRNA]</scope>
    <source>
        <tissue>Gametophyte</tissue>
    </source>
</reference>
<accession>Q9XEK7</accession>
<organism>
    <name type="scientific">Syntrichia ruralis</name>
    <name type="common">Great hairy screw-moss</name>
    <name type="synonym">Tortula ruralis</name>
    <dbReference type="NCBI Taxonomy" id="38588"/>
    <lineage>
        <taxon>Eukaryota</taxon>
        <taxon>Viridiplantae</taxon>
        <taxon>Streptophyta</taxon>
        <taxon>Embryophyta</taxon>
        <taxon>Bryophyta</taxon>
        <taxon>Bryophytina</taxon>
        <taxon>Bryopsida</taxon>
        <taxon>Dicranidae</taxon>
        <taxon>Pottiales</taxon>
        <taxon>Pottiaceae</taxon>
        <taxon>Syntrichia</taxon>
    </lineage>
</organism>
<evidence type="ECO:0000305" key="1"/>
<sequence length="142" mass="16217">MAAVESVQCFGRKKTAVAVTYCRRGRGLIRLTVPIELVEPEILRYKAFEPVLLLGRSKFAGVDMRIRVKGGGNTSQIYAIRQSIAKALVAYFQKYVDEQSKKEIKDVLLRYDRTLLVADPRRCEPKKFGGRGARSRFQKSYR</sequence>
<proteinExistence type="evidence at transcript level"/>
<feature type="chain" id="PRO_0000111494" description="Small ribosomal subunit protein uS9">
    <location>
        <begin position="1"/>
        <end position="142"/>
    </location>
</feature>